<sequence>MNGLLRIRQRYQGLAQSDKKLADYLLLQPDTARHLSSQQLANEAGVSQSSVVKFAQKLGYKGFPALKLALSEALASQPESPSVPIHNQIRGDDPLRLVGEKLIKENTAAMYATLNVNSEEKLHECVTMLRSARRIILTGIGASGLVAQNFAWKLMKIGFNAAAVRDMHALLATVQASSPDDLLLAISYTGVRRELNLAADEMLRVGGKVLAITGFTPNALQQRASHCLYTIAEEQATNSASISACHAQGMLTDLLFIALIQQDLELAPERIRHSEALVKKLV</sequence>
<dbReference type="EMBL" id="D64044">
    <property type="protein sequence ID" value="BAA10911.1"/>
    <property type="status" value="ALT_INIT"/>
    <property type="molecule type" value="Genomic_DNA"/>
</dbReference>
<dbReference type="EMBL" id="U36841">
    <property type="protein sequence ID" value="AAA79823.1"/>
    <property type="status" value="ALT_INIT"/>
    <property type="molecule type" value="Genomic_DNA"/>
</dbReference>
<dbReference type="EMBL" id="U00096">
    <property type="protein sequence ID" value="AAC75614.2"/>
    <property type="molecule type" value="Genomic_DNA"/>
</dbReference>
<dbReference type="EMBL" id="AP009048">
    <property type="protein sequence ID" value="BAE76737.1"/>
    <property type="molecule type" value="Genomic_DNA"/>
</dbReference>
<dbReference type="EMBL" id="X72336">
    <property type="status" value="NOT_ANNOTATED_CDS"/>
    <property type="molecule type" value="Genomic_DNA"/>
</dbReference>
<dbReference type="RefSeq" id="NP_417056.2">
    <property type="nucleotide sequence ID" value="NC_000913.3"/>
</dbReference>
<dbReference type="RefSeq" id="WP_001013779.1">
    <property type="nucleotide sequence ID" value="NZ_STEB01000011.1"/>
</dbReference>
<dbReference type="SMR" id="P37767"/>
<dbReference type="BioGRID" id="4261197">
    <property type="interactions" value="119"/>
</dbReference>
<dbReference type="DIP" id="DIP-12050N"/>
<dbReference type="FunCoup" id="P37767">
    <property type="interactions" value="19"/>
</dbReference>
<dbReference type="STRING" id="511145.b2561"/>
<dbReference type="jPOST" id="P37767"/>
<dbReference type="PaxDb" id="511145-b2561"/>
<dbReference type="EnsemblBacteria" id="AAC75614">
    <property type="protein sequence ID" value="AAC75614"/>
    <property type="gene ID" value="b2561"/>
</dbReference>
<dbReference type="GeneID" id="947030"/>
<dbReference type="KEGG" id="ecj:JW2545"/>
<dbReference type="KEGG" id="eco:b2561"/>
<dbReference type="KEGG" id="ecoc:C3026_14175"/>
<dbReference type="PATRIC" id="fig|1411691.4.peg.4173"/>
<dbReference type="EchoBASE" id="EB2214"/>
<dbReference type="eggNOG" id="COG1737">
    <property type="taxonomic scope" value="Bacteria"/>
</dbReference>
<dbReference type="HOGENOM" id="CLU_055769_0_2_6"/>
<dbReference type="InParanoid" id="P37767"/>
<dbReference type="OMA" id="FNAYHKF"/>
<dbReference type="OrthoDB" id="3684496at2"/>
<dbReference type="PhylomeDB" id="P37767"/>
<dbReference type="BioCyc" id="EcoCyc:EG12308-MONOMER"/>
<dbReference type="PRO" id="PR:P37767"/>
<dbReference type="Proteomes" id="UP000000625">
    <property type="component" value="Chromosome"/>
</dbReference>
<dbReference type="GO" id="GO:0097367">
    <property type="term" value="F:carbohydrate derivative binding"/>
    <property type="evidence" value="ECO:0007669"/>
    <property type="project" value="InterPro"/>
</dbReference>
<dbReference type="GO" id="GO:0003677">
    <property type="term" value="F:DNA binding"/>
    <property type="evidence" value="ECO:0007669"/>
    <property type="project" value="UniProtKB-KW"/>
</dbReference>
<dbReference type="GO" id="GO:0003700">
    <property type="term" value="F:DNA-binding transcription factor activity"/>
    <property type="evidence" value="ECO:0000318"/>
    <property type="project" value="GO_Central"/>
</dbReference>
<dbReference type="GO" id="GO:1901135">
    <property type="term" value="P:carbohydrate derivative metabolic process"/>
    <property type="evidence" value="ECO:0007669"/>
    <property type="project" value="InterPro"/>
</dbReference>
<dbReference type="GO" id="GO:0006355">
    <property type="term" value="P:regulation of DNA-templated transcription"/>
    <property type="evidence" value="ECO:0000318"/>
    <property type="project" value="GO_Central"/>
</dbReference>
<dbReference type="CDD" id="cd05013">
    <property type="entry name" value="SIS_RpiR"/>
    <property type="match status" value="1"/>
</dbReference>
<dbReference type="Gene3D" id="3.40.50.10490">
    <property type="entry name" value="Glucose-6-phosphate isomerase like protein, domain 1"/>
    <property type="match status" value="1"/>
</dbReference>
<dbReference type="Gene3D" id="1.10.10.10">
    <property type="entry name" value="Winged helix-like DNA-binding domain superfamily/Winged helix DNA-binding domain"/>
    <property type="match status" value="1"/>
</dbReference>
<dbReference type="InterPro" id="IPR009057">
    <property type="entry name" value="Homeodomain-like_sf"/>
</dbReference>
<dbReference type="InterPro" id="IPR000281">
    <property type="entry name" value="HTH_RpiR"/>
</dbReference>
<dbReference type="InterPro" id="IPR047640">
    <property type="entry name" value="RpiR-like"/>
</dbReference>
<dbReference type="InterPro" id="IPR035472">
    <property type="entry name" value="RpiR-like_SIS"/>
</dbReference>
<dbReference type="InterPro" id="IPR001347">
    <property type="entry name" value="SIS_dom"/>
</dbReference>
<dbReference type="InterPro" id="IPR046348">
    <property type="entry name" value="SIS_dom_sf"/>
</dbReference>
<dbReference type="InterPro" id="IPR036388">
    <property type="entry name" value="WH-like_DNA-bd_sf"/>
</dbReference>
<dbReference type="NCBIfam" id="NF008590">
    <property type="entry name" value="PRK11557.1"/>
    <property type="match status" value="1"/>
</dbReference>
<dbReference type="PANTHER" id="PTHR30514">
    <property type="entry name" value="GLUCOKINASE"/>
    <property type="match status" value="1"/>
</dbReference>
<dbReference type="PANTHER" id="PTHR30514:SF17">
    <property type="entry name" value="HTH-TYPE TRANSCRIPTIONAL REGULATOR MURR"/>
    <property type="match status" value="1"/>
</dbReference>
<dbReference type="Pfam" id="PF01418">
    <property type="entry name" value="HTH_6"/>
    <property type="match status" value="1"/>
</dbReference>
<dbReference type="Pfam" id="PF01380">
    <property type="entry name" value="SIS"/>
    <property type="match status" value="1"/>
</dbReference>
<dbReference type="SUPFAM" id="SSF46689">
    <property type="entry name" value="Homeodomain-like"/>
    <property type="match status" value="1"/>
</dbReference>
<dbReference type="SUPFAM" id="SSF53697">
    <property type="entry name" value="SIS domain"/>
    <property type="match status" value="1"/>
</dbReference>
<dbReference type="PROSITE" id="PS51071">
    <property type="entry name" value="HTH_RPIR"/>
    <property type="match status" value="1"/>
</dbReference>
<dbReference type="PROSITE" id="PS51464">
    <property type="entry name" value="SIS"/>
    <property type="match status" value="1"/>
</dbReference>
<proteinExistence type="predicted"/>
<organism>
    <name type="scientific">Escherichia coli (strain K12)</name>
    <dbReference type="NCBI Taxonomy" id="83333"/>
    <lineage>
        <taxon>Bacteria</taxon>
        <taxon>Pseudomonadati</taxon>
        <taxon>Pseudomonadota</taxon>
        <taxon>Gammaproteobacteria</taxon>
        <taxon>Enterobacterales</taxon>
        <taxon>Enterobacteriaceae</taxon>
        <taxon>Escherichia</taxon>
    </lineage>
</organism>
<feature type="chain" id="PRO_0000068626" description="Uncharacterized HTH-type transcriptional regulator YfhH">
    <location>
        <begin position="1"/>
        <end position="282"/>
    </location>
</feature>
<feature type="domain" description="HTH rpiR-type" evidence="1">
    <location>
        <begin position="1"/>
        <end position="77"/>
    </location>
</feature>
<feature type="domain" description="SIS" evidence="2">
    <location>
        <begin position="125"/>
        <end position="265"/>
    </location>
</feature>
<feature type="DNA-binding region" description="H-T-H motif" evidence="1">
    <location>
        <begin position="37"/>
        <end position="56"/>
    </location>
</feature>
<protein>
    <recommendedName>
        <fullName>Uncharacterized HTH-type transcriptional regulator YfhH</fullName>
    </recommendedName>
</protein>
<name>YFHH_ECOLI</name>
<evidence type="ECO:0000255" key="1">
    <source>
        <dbReference type="PROSITE-ProRule" id="PRU00390"/>
    </source>
</evidence>
<evidence type="ECO:0000255" key="2">
    <source>
        <dbReference type="PROSITE-ProRule" id="PRU00797"/>
    </source>
</evidence>
<evidence type="ECO:0000305" key="3"/>
<keyword id="KW-0238">DNA-binding</keyword>
<keyword id="KW-1185">Reference proteome</keyword>
<keyword id="KW-0804">Transcription</keyword>
<keyword id="KW-0805">Transcription regulation</keyword>
<comment type="sequence caution" evidence="3">
    <conflict type="erroneous initiation">
        <sequence resource="EMBL-CDS" id="AAA79823"/>
    </conflict>
    <text>Extended N-terminus.</text>
</comment>
<comment type="sequence caution" evidence="3">
    <conflict type="erroneous initiation">
        <sequence resource="EMBL-CDS" id="BAA10911"/>
    </conflict>
    <text>Extended N-terminus.</text>
</comment>
<accession>P37767</accession>
<accession>P76588</accession>
<accession>Q2MAG9</accession>
<gene>
    <name type="primary">yfhH</name>
    <name type="ordered locus">b2561</name>
    <name type="ordered locus">JW2545</name>
</gene>
<reference key="1">
    <citation type="submission" date="1995-09" db="EMBL/GenBank/DDBJ databases">
        <authorList>
            <person name="Nashimoto H."/>
            <person name="Saito N."/>
        </authorList>
    </citation>
    <scope>NUCLEOTIDE SEQUENCE [GENOMIC DNA]</scope>
    <source>
        <strain>K12</strain>
    </source>
</reference>
<reference key="2">
    <citation type="journal article" date="1997" name="Science">
        <title>The complete genome sequence of Escherichia coli K-12.</title>
        <authorList>
            <person name="Blattner F.R."/>
            <person name="Plunkett G. III"/>
            <person name="Bloch C.A."/>
            <person name="Perna N.T."/>
            <person name="Burland V."/>
            <person name="Riley M."/>
            <person name="Collado-Vides J."/>
            <person name="Glasner J.D."/>
            <person name="Rode C.K."/>
            <person name="Mayhew G.F."/>
            <person name="Gregor J."/>
            <person name="Davis N.W."/>
            <person name="Kirkpatrick H.A."/>
            <person name="Goeden M.A."/>
            <person name="Rose D.J."/>
            <person name="Mau B."/>
            <person name="Shao Y."/>
        </authorList>
    </citation>
    <scope>NUCLEOTIDE SEQUENCE [LARGE SCALE GENOMIC DNA]</scope>
    <source>
        <strain>K12 / MG1655 / ATCC 47076</strain>
    </source>
</reference>
<reference key="3">
    <citation type="journal article" date="2006" name="Mol. Syst. Biol.">
        <title>Highly accurate genome sequences of Escherichia coli K-12 strains MG1655 and W3110.</title>
        <authorList>
            <person name="Hayashi K."/>
            <person name="Morooka N."/>
            <person name="Yamamoto Y."/>
            <person name="Fujita K."/>
            <person name="Isono K."/>
            <person name="Choi S."/>
            <person name="Ohtsubo E."/>
            <person name="Baba T."/>
            <person name="Wanner B.L."/>
            <person name="Mori H."/>
            <person name="Horiuchi T."/>
        </authorList>
    </citation>
    <scope>NUCLEOTIDE SEQUENCE [LARGE SCALE GENOMIC DNA]</scope>
    <source>
        <strain>K12 / W3110 / ATCC 27325 / DSM 5911</strain>
    </source>
</reference>
<reference key="4">
    <citation type="journal article" date="1992" name="Mol. Microbiol.">
        <title>Analysis of an Escherichia coli mutant strain resistant to the cell-killing function encoded by the gef gene family.</title>
        <authorList>
            <person name="Poulsen L.K."/>
            <person name="Larsen N.W."/>
            <person name="Molin S."/>
            <person name="Andersson P."/>
        </authorList>
    </citation>
    <scope>NUCLEOTIDE SEQUENCE [GENOMIC DNA] OF 1-91</scope>
    <source>
        <strain>NWL37</strain>
    </source>
</reference>
<reference key="5">
    <citation type="journal article" date="1994" name="Nucleic Acids Res.">
        <title>Intrinsic and extrinsic approaches for detecting genes in a bacterial genome.</title>
        <authorList>
            <person name="Borodovsky M."/>
            <person name="Rudd K.E."/>
            <person name="Koonin E.V."/>
        </authorList>
    </citation>
    <scope>IDENTIFICATION</scope>
</reference>